<evidence type="ECO:0000255" key="1">
    <source>
        <dbReference type="HAMAP-Rule" id="MF_00412"/>
    </source>
</evidence>
<gene>
    <name evidence="1" type="primary">proA</name>
    <name type="ordered locus">Mbur_2416</name>
</gene>
<reference key="1">
    <citation type="journal article" date="2009" name="ISME J.">
        <title>The genome sequence of the psychrophilic archaeon, Methanococcoides burtonii: the role of genome evolution in cold adaptation.</title>
        <authorList>
            <person name="Allen M.A."/>
            <person name="Lauro F.M."/>
            <person name="Williams T.J."/>
            <person name="Burg D."/>
            <person name="Siddiqui K.S."/>
            <person name="De Francisci D."/>
            <person name="Chong K.W."/>
            <person name="Pilak O."/>
            <person name="Chew H.H."/>
            <person name="De Maere M.Z."/>
            <person name="Ting L."/>
            <person name="Katrib M."/>
            <person name="Ng C."/>
            <person name="Sowers K.R."/>
            <person name="Galperin M.Y."/>
            <person name="Anderson I.J."/>
            <person name="Ivanova N."/>
            <person name="Dalin E."/>
            <person name="Martinez M."/>
            <person name="Lapidus A."/>
            <person name="Hauser L."/>
            <person name="Land M."/>
            <person name="Thomas T."/>
            <person name="Cavicchioli R."/>
        </authorList>
    </citation>
    <scope>NUCLEOTIDE SEQUENCE [LARGE SCALE GENOMIC DNA]</scope>
    <source>
        <strain>DSM 6242 / NBRC 107633 / OCM 468 / ACE-M</strain>
    </source>
</reference>
<name>PROA_METBU</name>
<proteinExistence type="inferred from homology"/>
<dbReference type="EC" id="1.2.1.41" evidence="1"/>
<dbReference type="EMBL" id="CP000300">
    <property type="protein sequence ID" value="ABE53267.1"/>
    <property type="molecule type" value="Genomic_DNA"/>
</dbReference>
<dbReference type="RefSeq" id="WP_011500402.1">
    <property type="nucleotide sequence ID" value="NC_007955.1"/>
</dbReference>
<dbReference type="SMR" id="Q12TF9"/>
<dbReference type="STRING" id="259564.Mbur_2416"/>
<dbReference type="GeneID" id="3999006"/>
<dbReference type="KEGG" id="mbu:Mbur_2416"/>
<dbReference type="HOGENOM" id="CLU_030231_0_1_2"/>
<dbReference type="OrthoDB" id="53031at2157"/>
<dbReference type="UniPathway" id="UPA00098">
    <property type="reaction ID" value="UER00360"/>
</dbReference>
<dbReference type="Proteomes" id="UP000001979">
    <property type="component" value="Chromosome"/>
</dbReference>
<dbReference type="GO" id="GO:0005737">
    <property type="term" value="C:cytoplasm"/>
    <property type="evidence" value="ECO:0007669"/>
    <property type="project" value="UniProtKB-SubCell"/>
</dbReference>
<dbReference type="GO" id="GO:0004350">
    <property type="term" value="F:glutamate-5-semialdehyde dehydrogenase activity"/>
    <property type="evidence" value="ECO:0007669"/>
    <property type="project" value="UniProtKB-UniRule"/>
</dbReference>
<dbReference type="GO" id="GO:0050661">
    <property type="term" value="F:NADP binding"/>
    <property type="evidence" value="ECO:0007669"/>
    <property type="project" value="InterPro"/>
</dbReference>
<dbReference type="GO" id="GO:0055129">
    <property type="term" value="P:L-proline biosynthetic process"/>
    <property type="evidence" value="ECO:0007669"/>
    <property type="project" value="UniProtKB-UniRule"/>
</dbReference>
<dbReference type="CDD" id="cd07079">
    <property type="entry name" value="ALDH_F18-19_ProA-GPR"/>
    <property type="match status" value="1"/>
</dbReference>
<dbReference type="FunFam" id="3.40.309.10:FF:000006">
    <property type="entry name" value="Gamma-glutamyl phosphate reductase"/>
    <property type="match status" value="1"/>
</dbReference>
<dbReference type="Gene3D" id="3.40.605.10">
    <property type="entry name" value="Aldehyde Dehydrogenase, Chain A, domain 1"/>
    <property type="match status" value="1"/>
</dbReference>
<dbReference type="Gene3D" id="3.40.309.10">
    <property type="entry name" value="Aldehyde Dehydrogenase, Chain A, domain 2"/>
    <property type="match status" value="1"/>
</dbReference>
<dbReference type="HAMAP" id="MF_00412">
    <property type="entry name" value="ProA"/>
    <property type="match status" value="1"/>
</dbReference>
<dbReference type="InterPro" id="IPR016161">
    <property type="entry name" value="Ald_DH/histidinol_DH"/>
</dbReference>
<dbReference type="InterPro" id="IPR016163">
    <property type="entry name" value="Ald_DH_C"/>
</dbReference>
<dbReference type="InterPro" id="IPR016162">
    <property type="entry name" value="Ald_DH_N"/>
</dbReference>
<dbReference type="InterPro" id="IPR015590">
    <property type="entry name" value="Aldehyde_DH_dom"/>
</dbReference>
<dbReference type="InterPro" id="IPR020593">
    <property type="entry name" value="G-glutamylP_reductase_CS"/>
</dbReference>
<dbReference type="InterPro" id="IPR012134">
    <property type="entry name" value="Glu-5-SA_DH"/>
</dbReference>
<dbReference type="InterPro" id="IPR000965">
    <property type="entry name" value="GPR_dom"/>
</dbReference>
<dbReference type="NCBIfam" id="NF001221">
    <property type="entry name" value="PRK00197.1"/>
    <property type="match status" value="1"/>
</dbReference>
<dbReference type="NCBIfam" id="TIGR00407">
    <property type="entry name" value="proA"/>
    <property type="match status" value="1"/>
</dbReference>
<dbReference type="PANTHER" id="PTHR11063:SF8">
    <property type="entry name" value="DELTA-1-PYRROLINE-5-CARBOXYLATE SYNTHASE"/>
    <property type="match status" value="1"/>
</dbReference>
<dbReference type="PANTHER" id="PTHR11063">
    <property type="entry name" value="GLUTAMATE SEMIALDEHYDE DEHYDROGENASE"/>
    <property type="match status" value="1"/>
</dbReference>
<dbReference type="Pfam" id="PF00171">
    <property type="entry name" value="Aldedh"/>
    <property type="match status" value="1"/>
</dbReference>
<dbReference type="PIRSF" id="PIRSF000151">
    <property type="entry name" value="GPR"/>
    <property type="match status" value="1"/>
</dbReference>
<dbReference type="SUPFAM" id="SSF53720">
    <property type="entry name" value="ALDH-like"/>
    <property type="match status" value="1"/>
</dbReference>
<dbReference type="PROSITE" id="PS01223">
    <property type="entry name" value="PROA"/>
    <property type="match status" value="1"/>
</dbReference>
<comment type="function">
    <text evidence="1">Catalyzes the NADPH-dependent reduction of L-glutamate 5-phosphate into L-glutamate 5-semialdehyde and phosphate. The product spontaneously undergoes cyclization to form 1-pyrroline-5-carboxylate.</text>
</comment>
<comment type="catalytic activity">
    <reaction evidence="1">
        <text>L-glutamate 5-semialdehyde + phosphate + NADP(+) = L-glutamyl 5-phosphate + NADPH + H(+)</text>
        <dbReference type="Rhea" id="RHEA:19541"/>
        <dbReference type="ChEBI" id="CHEBI:15378"/>
        <dbReference type="ChEBI" id="CHEBI:43474"/>
        <dbReference type="ChEBI" id="CHEBI:57783"/>
        <dbReference type="ChEBI" id="CHEBI:58066"/>
        <dbReference type="ChEBI" id="CHEBI:58274"/>
        <dbReference type="ChEBI" id="CHEBI:58349"/>
        <dbReference type="EC" id="1.2.1.41"/>
    </reaction>
</comment>
<comment type="pathway">
    <text evidence="1">Amino-acid biosynthesis; L-proline biosynthesis; L-glutamate 5-semialdehyde from L-glutamate: step 2/2.</text>
</comment>
<comment type="subcellular location">
    <subcellularLocation>
        <location evidence="1">Cytoplasm</location>
    </subcellularLocation>
</comment>
<comment type="similarity">
    <text evidence="1">Belongs to the gamma-glutamyl phosphate reductase family.</text>
</comment>
<protein>
    <recommendedName>
        <fullName evidence="1">Gamma-glutamyl phosphate reductase</fullName>
        <shortName evidence="1">GPR</shortName>
        <ecNumber evidence="1">1.2.1.41</ecNumber>
    </recommendedName>
    <alternativeName>
        <fullName evidence="1">Glutamate-5-semialdehyde dehydrogenase</fullName>
    </alternativeName>
    <alternativeName>
        <fullName evidence="1">Glutamyl-gamma-semialdehyde dehydrogenase</fullName>
        <shortName evidence="1">GSA dehydrogenase</shortName>
    </alternativeName>
</protein>
<sequence length="449" mass="49610">MATDIEQKVMEAKMASIVLASVDTQTKDNALEAMAKALDANRNKILEANKADLEEAERMKNEGKLSQALVDRLKVTDPKIDGMISGIRDVIKLEDPSGRTINTLELDKGLELYQVSSPIGLIGVIFESRPDVVPQVMSLCLKSGNATVFKGGSEALNSNRVIFNILVEALEDTPGIPKGAFQLMETREEVMDILALDEYIDLLIPRGSNDFVKFIQDNTKISVLGHADGICHVYVDTNADLNKAYDVCFDSKVQYPAVCNAMETLLINREIAEEFLPEMVRRYEEVGVELRFDEGSYAIAEKLGSANIAKATEDDWKTEYNDFILSIKLVDSIEEAIDHINKYGSHHTDAIITENKTKRKQFIALVDSSSVMVNASTRFADGFRYGKGAEVGISTNKIHARGPVGMEGLVIYKYVLLGNGDKVATYAGDTPRPFTHKELDSKLSDIINE</sequence>
<keyword id="KW-0028">Amino-acid biosynthesis</keyword>
<keyword id="KW-0963">Cytoplasm</keyword>
<keyword id="KW-0521">NADP</keyword>
<keyword id="KW-0560">Oxidoreductase</keyword>
<keyword id="KW-0641">Proline biosynthesis</keyword>
<accession>Q12TF9</accession>
<feature type="chain" id="PRO_1000049963" description="Gamma-glutamyl phosphate reductase">
    <location>
        <begin position="1"/>
        <end position="449"/>
    </location>
</feature>
<organism>
    <name type="scientific">Methanococcoides burtonii (strain DSM 6242 / NBRC 107633 / OCM 468 / ACE-M)</name>
    <dbReference type="NCBI Taxonomy" id="259564"/>
    <lineage>
        <taxon>Archaea</taxon>
        <taxon>Methanobacteriati</taxon>
        <taxon>Methanobacteriota</taxon>
        <taxon>Stenosarchaea group</taxon>
        <taxon>Methanomicrobia</taxon>
        <taxon>Methanosarcinales</taxon>
        <taxon>Methanosarcinaceae</taxon>
        <taxon>Methanococcoides</taxon>
    </lineage>
</organism>